<keyword id="KW-0025">Alternative splicing</keyword>
<keyword id="KW-0966">Cell projection</keyword>
<keyword id="KW-0969">Cilium</keyword>
<keyword id="KW-0963">Cytoplasm</keyword>
<keyword id="KW-0206">Cytoskeleton</keyword>
<keyword id="KW-0343">GTPase activation</keyword>
<keyword id="KW-1185">Reference proteome</keyword>
<sequence>MSETSCSFFIEKEFQDGQLENVSAGLSSSYKDKGALMAFRGIPISELTNHGILQALTAETNGWQPGVVSEEVLRAQEEWEVVDTIHPDIESGVHCQQPGQLISFNEALEHFQSVDLSSFKKRIQPTIQRTGLAALRHCLFGPPKLHQGLREERDLVLTIAQCGLDSQNPTHGRVLQTIYKKLTGSKFDCALHGDHWEDLGFQGANPATDLRGAGFLALLHLLYLVMDSKTFLMAQEIFRLSHHHIQQFPFCLMSVNITRIAIQALREECLSRECNRRQKVIPVVNSFYAATFLHLARVWRTQQKTILDSGFVLKDLEALAKKSPKRLLKTLDDYLAQVSKGQTSLLEAHKRPGSQGPHSRDLTFTGVCDLQSHSFESAGLI</sequence>
<protein>
    <recommendedName>
        <fullName>ELMO domain-containing protein 3</fullName>
    </recommendedName>
    <alternativeName>
        <fullName>RNA-binding motif and ELMO domain-containing protein 1</fullName>
    </alternativeName>
</protein>
<accession>Q91YP6</accession>
<accession>Q3TNV2</accession>
<comment type="function">
    <text evidence="1">Acts as a GTPase-activating protein (GAP) for ARL2 with low specific activity.</text>
</comment>
<comment type="subcellular location">
    <subcellularLocation>
        <location evidence="3">Cell projection</location>
        <location evidence="3">Stereocilium</location>
    </subcellularLocation>
    <subcellularLocation>
        <location evidence="3">Cell projection</location>
        <location evidence="3">Kinocilium</location>
    </subcellularLocation>
    <subcellularLocation>
        <location evidence="3">Cytoplasm</location>
        <location evidence="3">Cytoskeleton</location>
    </subcellularLocation>
    <text>Also present in the cuticular plate of auditory hair cells. In the organ of Corti, in inner hair cells, expressed along the length of the stereocilia, but excluded from the very tip. Colocalizes with F-actin cytoskeleton.</text>
</comment>
<comment type="alternative products">
    <event type="alternative splicing"/>
    <isoform>
        <id>Q91YP6-1</id>
        <name>1</name>
        <name>b/c</name>
        <sequence type="displayed"/>
    </isoform>
    <isoform>
        <id>Q91YP6-2</id>
        <name>2</name>
        <name>a</name>
        <sequence type="described" ref="VSP_022925 VSP_022926"/>
    </isoform>
</comment>
<comment type="tissue specificity">
    <text evidence="3">Both isoform 1 and isoform 2 are widely expressed.</text>
</comment>
<comment type="developmental stage">
    <text evidence="3">Both isoform 1 and isoform 2 are expressed postnatally in the inner ear. Expression increases from P0 to P30 in both cochlear and vestibular tissues; at all time points, isoform 2 is expressed at several-fold higher levels than isoform 1. At P14, in the organ of Corti, detected along the length of stereocilia of hair cells, particularly in the upper half. Also observed in the microvilli on the apical surface of the hair cells. More abundant in the stereocilia of inner hair cells than in those of outer hair cells (at protein level). In the vestibular sensory epithelium, localizes within the hair cell and supporting cell bodies in the saccule and utricule. Not detected in vestibular hair bundles (at protein level).</text>
</comment>
<name>ELMD3_MOUSE</name>
<reference key="1">
    <citation type="journal article" date="2005" name="Science">
        <title>The transcriptional landscape of the mammalian genome.</title>
        <authorList>
            <person name="Carninci P."/>
            <person name="Kasukawa T."/>
            <person name="Katayama S."/>
            <person name="Gough J."/>
            <person name="Frith M.C."/>
            <person name="Maeda N."/>
            <person name="Oyama R."/>
            <person name="Ravasi T."/>
            <person name="Lenhard B."/>
            <person name="Wells C."/>
            <person name="Kodzius R."/>
            <person name="Shimokawa K."/>
            <person name="Bajic V.B."/>
            <person name="Brenner S.E."/>
            <person name="Batalov S."/>
            <person name="Forrest A.R."/>
            <person name="Zavolan M."/>
            <person name="Davis M.J."/>
            <person name="Wilming L.G."/>
            <person name="Aidinis V."/>
            <person name="Allen J.E."/>
            <person name="Ambesi-Impiombato A."/>
            <person name="Apweiler R."/>
            <person name="Aturaliya R.N."/>
            <person name="Bailey T.L."/>
            <person name="Bansal M."/>
            <person name="Baxter L."/>
            <person name="Beisel K.W."/>
            <person name="Bersano T."/>
            <person name="Bono H."/>
            <person name="Chalk A.M."/>
            <person name="Chiu K.P."/>
            <person name="Choudhary V."/>
            <person name="Christoffels A."/>
            <person name="Clutterbuck D.R."/>
            <person name="Crowe M.L."/>
            <person name="Dalla E."/>
            <person name="Dalrymple B.P."/>
            <person name="de Bono B."/>
            <person name="Della Gatta G."/>
            <person name="di Bernardo D."/>
            <person name="Down T."/>
            <person name="Engstrom P."/>
            <person name="Fagiolini M."/>
            <person name="Faulkner G."/>
            <person name="Fletcher C.F."/>
            <person name="Fukushima T."/>
            <person name="Furuno M."/>
            <person name="Futaki S."/>
            <person name="Gariboldi M."/>
            <person name="Georgii-Hemming P."/>
            <person name="Gingeras T.R."/>
            <person name="Gojobori T."/>
            <person name="Green R.E."/>
            <person name="Gustincich S."/>
            <person name="Harbers M."/>
            <person name="Hayashi Y."/>
            <person name="Hensch T.K."/>
            <person name="Hirokawa N."/>
            <person name="Hill D."/>
            <person name="Huminiecki L."/>
            <person name="Iacono M."/>
            <person name="Ikeo K."/>
            <person name="Iwama A."/>
            <person name="Ishikawa T."/>
            <person name="Jakt M."/>
            <person name="Kanapin A."/>
            <person name="Katoh M."/>
            <person name="Kawasawa Y."/>
            <person name="Kelso J."/>
            <person name="Kitamura H."/>
            <person name="Kitano H."/>
            <person name="Kollias G."/>
            <person name="Krishnan S.P."/>
            <person name="Kruger A."/>
            <person name="Kummerfeld S.K."/>
            <person name="Kurochkin I.V."/>
            <person name="Lareau L.F."/>
            <person name="Lazarevic D."/>
            <person name="Lipovich L."/>
            <person name="Liu J."/>
            <person name="Liuni S."/>
            <person name="McWilliam S."/>
            <person name="Madan Babu M."/>
            <person name="Madera M."/>
            <person name="Marchionni L."/>
            <person name="Matsuda H."/>
            <person name="Matsuzawa S."/>
            <person name="Miki H."/>
            <person name="Mignone F."/>
            <person name="Miyake S."/>
            <person name="Morris K."/>
            <person name="Mottagui-Tabar S."/>
            <person name="Mulder N."/>
            <person name="Nakano N."/>
            <person name="Nakauchi H."/>
            <person name="Ng P."/>
            <person name="Nilsson R."/>
            <person name="Nishiguchi S."/>
            <person name="Nishikawa S."/>
            <person name="Nori F."/>
            <person name="Ohara O."/>
            <person name="Okazaki Y."/>
            <person name="Orlando V."/>
            <person name="Pang K.C."/>
            <person name="Pavan W.J."/>
            <person name="Pavesi G."/>
            <person name="Pesole G."/>
            <person name="Petrovsky N."/>
            <person name="Piazza S."/>
            <person name="Reed J."/>
            <person name="Reid J.F."/>
            <person name="Ring B.Z."/>
            <person name="Ringwald M."/>
            <person name="Rost B."/>
            <person name="Ruan Y."/>
            <person name="Salzberg S.L."/>
            <person name="Sandelin A."/>
            <person name="Schneider C."/>
            <person name="Schoenbach C."/>
            <person name="Sekiguchi K."/>
            <person name="Semple C.A."/>
            <person name="Seno S."/>
            <person name="Sessa L."/>
            <person name="Sheng Y."/>
            <person name="Shibata Y."/>
            <person name="Shimada H."/>
            <person name="Shimada K."/>
            <person name="Silva D."/>
            <person name="Sinclair B."/>
            <person name="Sperling S."/>
            <person name="Stupka E."/>
            <person name="Sugiura K."/>
            <person name="Sultana R."/>
            <person name="Takenaka Y."/>
            <person name="Taki K."/>
            <person name="Tammoja K."/>
            <person name="Tan S.L."/>
            <person name="Tang S."/>
            <person name="Taylor M.S."/>
            <person name="Tegner J."/>
            <person name="Teichmann S.A."/>
            <person name="Ueda H.R."/>
            <person name="van Nimwegen E."/>
            <person name="Verardo R."/>
            <person name="Wei C.L."/>
            <person name="Yagi K."/>
            <person name="Yamanishi H."/>
            <person name="Zabarovsky E."/>
            <person name="Zhu S."/>
            <person name="Zimmer A."/>
            <person name="Hide W."/>
            <person name="Bult C."/>
            <person name="Grimmond S.M."/>
            <person name="Teasdale R.D."/>
            <person name="Liu E.T."/>
            <person name="Brusic V."/>
            <person name="Quackenbush J."/>
            <person name="Wahlestedt C."/>
            <person name="Mattick J.S."/>
            <person name="Hume D.A."/>
            <person name="Kai C."/>
            <person name="Sasaki D."/>
            <person name="Tomaru Y."/>
            <person name="Fukuda S."/>
            <person name="Kanamori-Katayama M."/>
            <person name="Suzuki M."/>
            <person name="Aoki J."/>
            <person name="Arakawa T."/>
            <person name="Iida J."/>
            <person name="Imamura K."/>
            <person name="Itoh M."/>
            <person name="Kato T."/>
            <person name="Kawaji H."/>
            <person name="Kawagashira N."/>
            <person name="Kawashima T."/>
            <person name="Kojima M."/>
            <person name="Kondo S."/>
            <person name="Konno H."/>
            <person name="Nakano K."/>
            <person name="Ninomiya N."/>
            <person name="Nishio T."/>
            <person name="Okada M."/>
            <person name="Plessy C."/>
            <person name="Shibata K."/>
            <person name="Shiraki T."/>
            <person name="Suzuki S."/>
            <person name="Tagami M."/>
            <person name="Waki K."/>
            <person name="Watahiki A."/>
            <person name="Okamura-Oho Y."/>
            <person name="Suzuki H."/>
            <person name="Kawai J."/>
            <person name="Hayashizaki Y."/>
        </authorList>
    </citation>
    <scope>NUCLEOTIDE SEQUENCE [LARGE SCALE MRNA] (ISOFORMS 1 AND 2)</scope>
    <source>
        <strain>C57BL/6J</strain>
        <tissue>Embryonic stem cell</tissue>
        <tissue>Eye</tissue>
        <tissue>Spinal ganglion</tissue>
    </source>
</reference>
<reference key="2">
    <citation type="journal article" date="2004" name="Genome Res.">
        <title>The status, quality, and expansion of the NIH full-length cDNA project: the Mammalian Gene Collection (MGC).</title>
        <authorList>
            <consortium name="The MGC Project Team"/>
        </authorList>
    </citation>
    <scope>NUCLEOTIDE SEQUENCE [LARGE SCALE MRNA] (ISOFORM 1)</scope>
    <source>
        <strain>FVB/N</strain>
        <tissue>Mammary tumor</tissue>
    </source>
</reference>
<reference key="3">
    <citation type="journal article" date="2013" name="PLoS Genet.">
        <title>An alteration in ELMOD3, an Arl2 GTPase-activating protein, is associated with hearing impairment in humans.</title>
        <authorList>
            <person name="Jaworek T.J."/>
            <person name="Richard E.M."/>
            <person name="Ivanova A.A."/>
            <person name="Giese A.P."/>
            <person name="Choo D.I."/>
            <person name="Khan S.N."/>
            <person name="Riazuddin S."/>
            <person name="Kahn R.A."/>
            <person name="Riazuddin S."/>
        </authorList>
    </citation>
    <scope>TISSUE SPECIFICITY</scope>
    <scope>SUBCELLULAR LOCATION</scope>
    <scope>DEVELOPMENTAL STAGE</scope>
</reference>
<evidence type="ECO:0000250" key="1"/>
<evidence type="ECO:0000255" key="2">
    <source>
        <dbReference type="PROSITE-ProRule" id="PRU00664"/>
    </source>
</evidence>
<evidence type="ECO:0000269" key="3">
    <source>
    </source>
</evidence>
<evidence type="ECO:0000303" key="4">
    <source>
    </source>
</evidence>
<evidence type="ECO:0000305" key="5"/>
<gene>
    <name type="primary">Elmod3</name>
    <name type="synonym">Rbed1</name>
</gene>
<feature type="chain" id="PRO_0000274904" description="ELMO domain-containing protein 3">
    <location>
        <begin position="1"/>
        <end position="381"/>
    </location>
</feature>
<feature type="domain" description="ELMO" evidence="2">
    <location>
        <begin position="170"/>
        <end position="324"/>
    </location>
</feature>
<feature type="splice variant" id="VSP_022925" description="In isoform 2." evidence="4">
    <original>DLEALAKKSPKRLL</original>
    <variation>GWHFLLCPGPRIPG</variation>
    <location>
        <begin position="315"/>
        <end position="328"/>
    </location>
</feature>
<feature type="splice variant" id="VSP_022926" description="In isoform 2." evidence="4">
    <location>
        <begin position="329"/>
        <end position="381"/>
    </location>
</feature>
<feature type="sequence conflict" description="In Ref. 1; BAE37985." evidence="5" ref="1">
    <original>L</original>
    <variation>P</variation>
    <location>
        <position position="139"/>
    </location>
</feature>
<proteinExistence type="evidence at protein level"/>
<dbReference type="EMBL" id="AK049155">
    <property type="protein sequence ID" value="BAC33574.1"/>
    <property type="molecule type" value="mRNA"/>
</dbReference>
<dbReference type="EMBL" id="AK084010">
    <property type="protein sequence ID" value="BAC39096.1"/>
    <property type="molecule type" value="mRNA"/>
</dbReference>
<dbReference type="EMBL" id="AK164974">
    <property type="protein sequence ID" value="BAE37985.1"/>
    <property type="molecule type" value="mRNA"/>
</dbReference>
<dbReference type="EMBL" id="BC016193">
    <property type="protein sequence ID" value="AAH16193.1"/>
    <property type="molecule type" value="mRNA"/>
</dbReference>
<dbReference type="CCDS" id="CCDS20243.1">
    <molecule id="Q91YP6-1"/>
</dbReference>
<dbReference type="RefSeq" id="NP_001240621.1">
    <molecule id="Q91YP6-1"/>
    <property type="nucleotide sequence ID" value="NM_001253692.1"/>
</dbReference>
<dbReference type="RefSeq" id="NP_001351482.1">
    <molecule id="Q91YP6-1"/>
    <property type="nucleotide sequence ID" value="NM_001364553.1"/>
</dbReference>
<dbReference type="RefSeq" id="NP_001351483.1">
    <molecule id="Q91YP6-1"/>
    <property type="nucleotide sequence ID" value="NM_001364554.1"/>
</dbReference>
<dbReference type="RefSeq" id="NP_659166.1">
    <molecule id="Q91YP6-1"/>
    <property type="nucleotide sequence ID" value="NM_144917.5"/>
</dbReference>
<dbReference type="RefSeq" id="XP_006506021.1">
    <property type="nucleotide sequence ID" value="XM_006505958.1"/>
</dbReference>
<dbReference type="RefSeq" id="XP_006506022.1">
    <property type="nucleotide sequence ID" value="XM_006505959.1"/>
</dbReference>
<dbReference type="RefSeq" id="XP_011239601.1">
    <property type="nucleotide sequence ID" value="XM_011241299.1"/>
</dbReference>
<dbReference type="RefSeq" id="XP_030111193.1">
    <molecule id="Q91YP6-1"/>
    <property type="nucleotide sequence ID" value="XM_030255333.2"/>
</dbReference>
<dbReference type="RefSeq" id="XP_030111194.1">
    <molecule id="Q91YP6-1"/>
    <property type="nucleotide sequence ID" value="XM_030255334.2"/>
</dbReference>
<dbReference type="RefSeq" id="XP_030111195.1">
    <molecule id="Q91YP6-1"/>
    <property type="nucleotide sequence ID" value="XM_030255335.2"/>
</dbReference>
<dbReference type="SMR" id="Q91YP6"/>
<dbReference type="FunCoup" id="Q91YP6">
    <property type="interactions" value="1437"/>
</dbReference>
<dbReference type="STRING" id="10090.ENSMUSP00000109703"/>
<dbReference type="iPTMnet" id="Q91YP6"/>
<dbReference type="PhosphoSitePlus" id="Q91YP6"/>
<dbReference type="PaxDb" id="10090-ENSMUSP00000067768"/>
<dbReference type="ProteomicsDB" id="277784">
    <molecule id="Q91YP6-1"/>
</dbReference>
<dbReference type="ProteomicsDB" id="277785">
    <molecule id="Q91YP6-2"/>
</dbReference>
<dbReference type="Antibodypedia" id="1572">
    <property type="antibodies" value="85 antibodies from 23 providers"/>
</dbReference>
<dbReference type="Ensembl" id="ENSMUST00000070990.8">
    <molecule id="Q91YP6-1"/>
    <property type="protein sequence ID" value="ENSMUSP00000067768.2"/>
    <property type="gene ID" value="ENSMUSG00000056698.12"/>
</dbReference>
<dbReference type="Ensembl" id="ENSMUST00000114069.8">
    <molecule id="Q91YP6-1"/>
    <property type="protein sequence ID" value="ENSMUSP00000109703.2"/>
    <property type="gene ID" value="ENSMUSG00000056698.12"/>
</dbReference>
<dbReference type="Ensembl" id="ENSMUST00000141833.8">
    <molecule id="Q91YP6-2"/>
    <property type="protein sequence ID" value="ENSMUSP00000145544.2"/>
    <property type="gene ID" value="ENSMUSG00000056698.12"/>
</dbReference>
<dbReference type="GeneID" id="232089"/>
<dbReference type="KEGG" id="mmu:232089"/>
<dbReference type="UCSC" id="uc009ciu.2">
    <molecule id="Q91YP6-1"/>
    <property type="organism name" value="mouse"/>
</dbReference>
<dbReference type="UCSC" id="uc009ciw.2">
    <molecule id="Q91YP6-2"/>
    <property type="organism name" value="mouse"/>
</dbReference>
<dbReference type="AGR" id="MGI:2445168"/>
<dbReference type="CTD" id="84173"/>
<dbReference type="MGI" id="MGI:2445168">
    <property type="gene designation" value="Elmod3"/>
</dbReference>
<dbReference type="VEuPathDB" id="HostDB:ENSMUSG00000056698"/>
<dbReference type="eggNOG" id="KOG2998">
    <property type="taxonomic scope" value="Eukaryota"/>
</dbReference>
<dbReference type="GeneTree" id="ENSGT00390000009488"/>
<dbReference type="HOGENOM" id="CLU_060970_0_0_1"/>
<dbReference type="InParanoid" id="Q91YP6"/>
<dbReference type="OMA" id="PHWENIG"/>
<dbReference type="OrthoDB" id="266227at2759"/>
<dbReference type="PhylomeDB" id="Q91YP6"/>
<dbReference type="TreeFam" id="TF323472"/>
<dbReference type="BioGRID-ORCS" id="232089">
    <property type="hits" value="4 hits in 76 CRISPR screens"/>
</dbReference>
<dbReference type="ChiTaRS" id="Elmod3">
    <property type="organism name" value="mouse"/>
</dbReference>
<dbReference type="PRO" id="PR:Q91YP6"/>
<dbReference type="Proteomes" id="UP000000589">
    <property type="component" value="Chromosome 6"/>
</dbReference>
<dbReference type="RNAct" id="Q91YP6">
    <property type="molecule type" value="protein"/>
</dbReference>
<dbReference type="Bgee" id="ENSMUSG00000056698">
    <property type="expression patterns" value="Expressed in olfactory epithelium and 242 other cell types or tissues"/>
</dbReference>
<dbReference type="ExpressionAtlas" id="Q91YP6">
    <property type="expression patterns" value="baseline and differential"/>
</dbReference>
<dbReference type="GO" id="GO:0005929">
    <property type="term" value="C:cilium"/>
    <property type="evidence" value="ECO:0000315"/>
    <property type="project" value="MGI"/>
</dbReference>
<dbReference type="GO" id="GO:0005856">
    <property type="term" value="C:cytoskeleton"/>
    <property type="evidence" value="ECO:0007669"/>
    <property type="project" value="UniProtKB-SubCell"/>
</dbReference>
<dbReference type="GO" id="GO:0005794">
    <property type="term" value="C:Golgi apparatus"/>
    <property type="evidence" value="ECO:0000315"/>
    <property type="project" value="MGI"/>
</dbReference>
<dbReference type="GO" id="GO:0060091">
    <property type="term" value="C:kinocilium"/>
    <property type="evidence" value="ECO:0007669"/>
    <property type="project" value="UniProtKB-SubCell"/>
</dbReference>
<dbReference type="GO" id="GO:0032420">
    <property type="term" value="C:stereocilium"/>
    <property type="evidence" value="ECO:0007669"/>
    <property type="project" value="UniProtKB-SubCell"/>
</dbReference>
<dbReference type="GO" id="GO:0060117">
    <property type="term" value="P:auditory receptor cell development"/>
    <property type="evidence" value="ECO:0000315"/>
    <property type="project" value="MGI"/>
</dbReference>
<dbReference type="GO" id="GO:0060271">
    <property type="term" value="P:cilium assembly"/>
    <property type="evidence" value="ECO:0000315"/>
    <property type="project" value="MGI"/>
</dbReference>
<dbReference type="GO" id="GO:0007010">
    <property type="term" value="P:cytoskeleton organization"/>
    <property type="evidence" value="ECO:0000315"/>
    <property type="project" value="MGI"/>
</dbReference>
<dbReference type="GO" id="GO:0010467">
    <property type="term" value="P:gene expression"/>
    <property type="evidence" value="ECO:0000315"/>
    <property type="project" value="MGI"/>
</dbReference>
<dbReference type="GO" id="GO:0008104">
    <property type="term" value="P:protein localization"/>
    <property type="evidence" value="ECO:0000315"/>
    <property type="project" value="MGI"/>
</dbReference>
<dbReference type="GO" id="GO:0015031">
    <property type="term" value="P:protein transport"/>
    <property type="evidence" value="ECO:0000315"/>
    <property type="project" value="MGI"/>
</dbReference>
<dbReference type="GO" id="GO:0007605">
    <property type="term" value="P:sensory perception of sound"/>
    <property type="evidence" value="ECO:0000315"/>
    <property type="project" value="MGI"/>
</dbReference>
<dbReference type="GO" id="GO:0120045">
    <property type="term" value="P:stereocilium maintenance"/>
    <property type="evidence" value="ECO:0000315"/>
    <property type="project" value="MGI"/>
</dbReference>
<dbReference type="InterPro" id="IPR006816">
    <property type="entry name" value="ELMO_dom"/>
</dbReference>
<dbReference type="InterPro" id="IPR050868">
    <property type="entry name" value="ELMO_domain-containing"/>
</dbReference>
<dbReference type="PANTHER" id="PTHR12771:SF2">
    <property type="entry name" value="ELMO DOMAIN-CONTAINING PROTEIN 3"/>
    <property type="match status" value="1"/>
</dbReference>
<dbReference type="PANTHER" id="PTHR12771">
    <property type="entry name" value="ENGULFMENT AND CELL MOTILITY"/>
    <property type="match status" value="1"/>
</dbReference>
<dbReference type="Pfam" id="PF04727">
    <property type="entry name" value="ELMO_CED12"/>
    <property type="match status" value="1"/>
</dbReference>
<dbReference type="PROSITE" id="PS51335">
    <property type="entry name" value="ELMO"/>
    <property type="match status" value="1"/>
</dbReference>
<organism>
    <name type="scientific">Mus musculus</name>
    <name type="common">Mouse</name>
    <dbReference type="NCBI Taxonomy" id="10090"/>
    <lineage>
        <taxon>Eukaryota</taxon>
        <taxon>Metazoa</taxon>
        <taxon>Chordata</taxon>
        <taxon>Craniata</taxon>
        <taxon>Vertebrata</taxon>
        <taxon>Euteleostomi</taxon>
        <taxon>Mammalia</taxon>
        <taxon>Eutheria</taxon>
        <taxon>Euarchontoglires</taxon>
        <taxon>Glires</taxon>
        <taxon>Rodentia</taxon>
        <taxon>Myomorpha</taxon>
        <taxon>Muroidea</taxon>
        <taxon>Muridae</taxon>
        <taxon>Murinae</taxon>
        <taxon>Mus</taxon>
        <taxon>Mus</taxon>
    </lineage>
</organism>